<proteinExistence type="evidence at protein level"/>
<organism>
    <name type="scientific">Homo sapiens</name>
    <name type="common">Human</name>
    <dbReference type="NCBI Taxonomy" id="9606"/>
    <lineage>
        <taxon>Eukaryota</taxon>
        <taxon>Metazoa</taxon>
        <taxon>Chordata</taxon>
        <taxon>Craniata</taxon>
        <taxon>Vertebrata</taxon>
        <taxon>Euteleostomi</taxon>
        <taxon>Mammalia</taxon>
        <taxon>Eutheria</taxon>
        <taxon>Euarchontoglires</taxon>
        <taxon>Primates</taxon>
        <taxon>Haplorrhini</taxon>
        <taxon>Catarrhini</taxon>
        <taxon>Hominidae</taxon>
        <taxon>Homo</taxon>
    </lineage>
</organism>
<protein>
    <recommendedName>
        <fullName evidence="5">Sideroflexin-3</fullName>
    </recommendedName>
</protein>
<dbReference type="EMBL" id="AK074707">
    <property type="protein sequence ID" value="BAC11151.1"/>
    <property type="status" value="ALT_INIT"/>
    <property type="molecule type" value="mRNA"/>
</dbReference>
<dbReference type="EMBL" id="AL133215">
    <property type="status" value="NOT_ANNOTATED_CDS"/>
    <property type="molecule type" value="Genomic_DNA"/>
</dbReference>
<dbReference type="EMBL" id="BC000124">
    <property type="protein sequence ID" value="AAH00124.2"/>
    <property type="status" value="ALT_INIT"/>
    <property type="molecule type" value="mRNA"/>
</dbReference>
<dbReference type="CCDS" id="CCDS7508.3"/>
<dbReference type="RefSeq" id="NP_112233.2">
    <property type="nucleotide sequence ID" value="NM_030971.3"/>
</dbReference>
<dbReference type="BioGRID" id="123605">
    <property type="interactions" value="210"/>
</dbReference>
<dbReference type="FunCoup" id="Q9BWM7">
    <property type="interactions" value="1005"/>
</dbReference>
<dbReference type="IntAct" id="Q9BWM7">
    <property type="interactions" value="111"/>
</dbReference>
<dbReference type="MINT" id="Q9BWM7"/>
<dbReference type="STRING" id="9606.ENSP00000224807"/>
<dbReference type="GlyGen" id="Q9BWM7">
    <property type="glycosylation" value="3 sites, 1 N-linked glycan (1 site), 1 O-linked glycan (1 site)"/>
</dbReference>
<dbReference type="iPTMnet" id="Q9BWM7"/>
<dbReference type="PhosphoSitePlus" id="Q9BWM7"/>
<dbReference type="SwissPalm" id="Q9BWM7"/>
<dbReference type="BioMuta" id="SFXN3"/>
<dbReference type="DMDM" id="308153497"/>
<dbReference type="jPOST" id="Q9BWM7"/>
<dbReference type="MassIVE" id="Q9BWM7"/>
<dbReference type="PaxDb" id="9606-ENSP00000224807"/>
<dbReference type="PeptideAtlas" id="Q9BWM7"/>
<dbReference type="ProteomicsDB" id="79293"/>
<dbReference type="Pumba" id="Q9BWM7"/>
<dbReference type="Antibodypedia" id="2332">
    <property type="antibodies" value="142 antibodies from 25 providers"/>
</dbReference>
<dbReference type="DNASU" id="81855"/>
<dbReference type="Ensembl" id="ENST00000393459.6">
    <property type="protein sequence ID" value="ENSP00000377103.1"/>
    <property type="gene ID" value="ENSG00000107819.15"/>
</dbReference>
<dbReference type="GeneID" id="81855"/>
<dbReference type="KEGG" id="hsa:81855"/>
<dbReference type="MANE-Select" id="ENST00000393459.6">
    <property type="protein sequence ID" value="ENSP00000377103.1"/>
    <property type="RefSeq nucleotide sequence ID" value="NM_030971.6"/>
    <property type="RefSeq protein sequence ID" value="NP_112233.3"/>
</dbReference>
<dbReference type="UCSC" id="uc057vma.1">
    <property type="organism name" value="human"/>
</dbReference>
<dbReference type="AGR" id="HGNC:16087"/>
<dbReference type="CTD" id="81855"/>
<dbReference type="DisGeNET" id="81855"/>
<dbReference type="GeneCards" id="SFXN3"/>
<dbReference type="HGNC" id="HGNC:16087">
    <property type="gene designation" value="SFXN3"/>
</dbReference>
<dbReference type="HPA" id="ENSG00000107819">
    <property type="expression patterns" value="Low tissue specificity"/>
</dbReference>
<dbReference type="MIM" id="615571">
    <property type="type" value="gene"/>
</dbReference>
<dbReference type="neXtProt" id="NX_Q9BWM7"/>
<dbReference type="OpenTargets" id="ENSG00000107819"/>
<dbReference type="PharmGKB" id="PA38092"/>
<dbReference type="VEuPathDB" id="HostDB:ENSG00000107819"/>
<dbReference type="eggNOG" id="KOG3767">
    <property type="taxonomic scope" value="Eukaryota"/>
</dbReference>
<dbReference type="GeneTree" id="ENSGT01030000234641"/>
<dbReference type="InParanoid" id="Q9BWM7"/>
<dbReference type="OMA" id="STPICCA"/>
<dbReference type="OrthoDB" id="6608471at2759"/>
<dbReference type="PAN-GO" id="Q9BWM7">
    <property type="GO annotations" value="3 GO annotations based on evolutionary models"/>
</dbReference>
<dbReference type="PhylomeDB" id="Q9BWM7"/>
<dbReference type="TreeFam" id="TF313205"/>
<dbReference type="PathwayCommons" id="Q9BWM7"/>
<dbReference type="SignaLink" id="Q9BWM7"/>
<dbReference type="BioGRID-ORCS" id="81855">
    <property type="hits" value="7 hits in 1145 CRISPR screens"/>
</dbReference>
<dbReference type="CD-CODE" id="FB4E32DD">
    <property type="entry name" value="Presynaptic clusters and postsynaptic densities"/>
</dbReference>
<dbReference type="ChiTaRS" id="SFXN3">
    <property type="organism name" value="human"/>
</dbReference>
<dbReference type="GenomeRNAi" id="81855"/>
<dbReference type="Pharos" id="Q9BWM7">
    <property type="development level" value="Tbio"/>
</dbReference>
<dbReference type="PRO" id="PR:Q9BWM7"/>
<dbReference type="Proteomes" id="UP000005640">
    <property type="component" value="Chromosome 10"/>
</dbReference>
<dbReference type="RNAct" id="Q9BWM7">
    <property type="molecule type" value="protein"/>
</dbReference>
<dbReference type="Bgee" id="ENSG00000107819">
    <property type="expression patterns" value="Expressed in cerebellar hemisphere and 208 other cell types or tissues"/>
</dbReference>
<dbReference type="ExpressionAtlas" id="Q9BWM7">
    <property type="expression patterns" value="baseline and differential"/>
</dbReference>
<dbReference type="GO" id="GO:0005743">
    <property type="term" value="C:mitochondrial inner membrane"/>
    <property type="evidence" value="ECO:0000318"/>
    <property type="project" value="GO_Central"/>
</dbReference>
<dbReference type="GO" id="GO:0005739">
    <property type="term" value="C:mitochondrion"/>
    <property type="evidence" value="ECO:0000314"/>
    <property type="project" value="UniProtKB"/>
</dbReference>
<dbReference type="GO" id="GO:0015194">
    <property type="term" value="F:L-serine transmembrane transporter activity"/>
    <property type="evidence" value="ECO:0000314"/>
    <property type="project" value="UniProtKB"/>
</dbReference>
<dbReference type="GO" id="GO:0015075">
    <property type="term" value="F:monoatomic ion transmembrane transporter activity"/>
    <property type="evidence" value="ECO:0007669"/>
    <property type="project" value="InterPro"/>
</dbReference>
<dbReference type="GO" id="GO:0022857">
    <property type="term" value="F:transmembrane transporter activity"/>
    <property type="evidence" value="ECO:0000318"/>
    <property type="project" value="GO_Central"/>
</dbReference>
<dbReference type="GO" id="GO:1990542">
    <property type="term" value="P:mitochondrial transmembrane transport"/>
    <property type="evidence" value="ECO:0000314"/>
    <property type="project" value="UniProtKB"/>
</dbReference>
<dbReference type="GO" id="GO:0006730">
    <property type="term" value="P:one-carbon metabolic process"/>
    <property type="evidence" value="ECO:0000314"/>
    <property type="project" value="UniProtKB"/>
</dbReference>
<dbReference type="GO" id="GO:0140300">
    <property type="term" value="P:serine import into mitochondrion"/>
    <property type="evidence" value="ECO:0000314"/>
    <property type="project" value="UniProtKB"/>
</dbReference>
<dbReference type="InterPro" id="IPR004686">
    <property type="entry name" value="Mtc"/>
</dbReference>
<dbReference type="NCBIfam" id="TIGR00798">
    <property type="entry name" value="mtc"/>
    <property type="match status" value="1"/>
</dbReference>
<dbReference type="PANTHER" id="PTHR11153">
    <property type="entry name" value="SIDEROFLEXIN"/>
    <property type="match status" value="1"/>
</dbReference>
<dbReference type="PANTHER" id="PTHR11153:SF20">
    <property type="entry name" value="SIDEROFLEXIN-3"/>
    <property type="match status" value="1"/>
</dbReference>
<dbReference type="Pfam" id="PF03820">
    <property type="entry name" value="SFXNs"/>
    <property type="match status" value="1"/>
</dbReference>
<feature type="chain" id="PRO_0000177037" description="Sideroflexin-3">
    <location>
        <begin position="1"/>
        <end position="321"/>
    </location>
</feature>
<feature type="transmembrane region" description="Helical" evidence="1">
    <location>
        <begin position="146"/>
        <end position="164"/>
    </location>
</feature>
<feature type="transmembrane region" description="Helical" evidence="1">
    <location>
        <begin position="174"/>
        <end position="194"/>
    </location>
</feature>
<feature type="transmembrane region" description="Helical" evidence="1">
    <location>
        <begin position="226"/>
        <end position="246"/>
    </location>
</feature>
<feature type="transmembrane region" description="Helical" evidence="1">
    <location>
        <begin position="266"/>
        <end position="286"/>
    </location>
</feature>
<feature type="modified residue" description="N-acetylmethionine" evidence="2">
    <location>
        <position position="1"/>
    </location>
</feature>
<reference key="1">
    <citation type="journal article" date="2004" name="Nat. Genet.">
        <title>Complete sequencing and characterization of 21,243 full-length human cDNAs.</title>
        <authorList>
            <person name="Ota T."/>
            <person name="Suzuki Y."/>
            <person name="Nishikawa T."/>
            <person name="Otsuki T."/>
            <person name="Sugiyama T."/>
            <person name="Irie R."/>
            <person name="Wakamatsu A."/>
            <person name="Hayashi K."/>
            <person name="Sato H."/>
            <person name="Nagai K."/>
            <person name="Kimura K."/>
            <person name="Makita H."/>
            <person name="Sekine M."/>
            <person name="Obayashi M."/>
            <person name="Nishi T."/>
            <person name="Shibahara T."/>
            <person name="Tanaka T."/>
            <person name="Ishii S."/>
            <person name="Yamamoto J."/>
            <person name="Saito K."/>
            <person name="Kawai Y."/>
            <person name="Isono Y."/>
            <person name="Nakamura Y."/>
            <person name="Nagahari K."/>
            <person name="Murakami K."/>
            <person name="Yasuda T."/>
            <person name="Iwayanagi T."/>
            <person name="Wagatsuma M."/>
            <person name="Shiratori A."/>
            <person name="Sudo H."/>
            <person name="Hosoiri T."/>
            <person name="Kaku Y."/>
            <person name="Kodaira H."/>
            <person name="Kondo H."/>
            <person name="Sugawara M."/>
            <person name="Takahashi M."/>
            <person name="Kanda K."/>
            <person name="Yokoi T."/>
            <person name="Furuya T."/>
            <person name="Kikkawa E."/>
            <person name="Omura Y."/>
            <person name="Abe K."/>
            <person name="Kamihara K."/>
            <person name="Katsuta N."/>
            <person name="Sato K."/>
            <person name="Tanikawa M."/>
            <person name="Yamazaki M."/>
            <person name="Ninomiya K."/>
            <person name="Ishibashi T."/>
            <person name="Yamashita H."/>
            <person name="Murakawa K."/>
            <person name="Fujimori K."/>
            <person name="Tanai H."/>
            <person name="Kimata M."/>
            <person name="Watanabe M."/>
            <person name="Hiraoka S."/>
            <person name="Chiba Y."/>
            <person name="Ishida S."/>
            <person name="Ono Y."/>
            <person name="Takiguchi S."/>
            <person name="Watanabe S."/>
            <person name="Yosida M."/>
            <person name="Hotuta T."/>
            <person name="Kusano J."/>
            <person name="Kanehori K."/>
            <person name="Takahashi-Fujii A."/>
            <person name="Hara H."/>
            <person name="Tanase T.-O."/>
            <person name="Nomura Y."/>
            <person name="Togiya S."/>
            <person name="Komai F."/>
            <person name="Hara R."/>
            <person name="Takeuchi K."/>
            <person name="Arita M."/>
            <person name="Imose N."/>
            <person name="Musashino K."/>
            <person name="Yuuki H."/>
            <person name="Oshima A."/>
            <person name="Sasaki N."/>
            <person name="Aotsuka S."/>
            <person name="Yoshikawa Y."/>
            <person name="Matsunawa H."/>
            <person name="Ichihara T."/>
            <person name="Shiohata N."/>
            <person name="Sano S."/>
            <person name="Moriya S."/>
            <person name="Momiyama H."/>
            <person name="Satoh N."/>
            <person name="Takami S."/>
            <person name="Terashima Y."/>
            <person name="Suzuki O."/>
            <person name="Nakagawa S."/>
            <person name="Senoh A."/>
            <person name="Mizoguchi H."/>
            <person name="Goto Y."/>
            <person name="Shimizu F."/>
            <person name="Wakebe H."/>
            <person name="Hishigaki H."/>
            <person name="Watanabe T."/>
            <person name="Sugiyama A."/>
            <person name="Takemoto M."/>
            <person name="Kawakami B."/>
            <person name="Yamazaki M."/>
            <person name="Watanabe K."/>
            <person name="Kumagai A."/>
            <person name="Itakura S."/>
            <person name="Fukuzumi Y."/>
            <person name="Fujimori Y."/>
            <person name="Komiyama M."/>
            <person name="Tashiro H."/>
            <person name="Tanigami A."/>
            <person name="Fujiwara T."/>
            <person name="Ono T."/>
            <person name="Yamada K."/>
            <person name="Fujii Y."/>
            <person name="Ozaki K."/>
            <person name="Hirao M."/>
            <person name="Ohmori Y."/>
            <person name="Kawabata A."/>
            <person name="Hikiji T."/>
            <person name="Kobatake N."/>
            <person name="Inagaki H."/>
            <person name="Ikema Y."/>
            <person name="Okamoto S."/>
            <person name="Okitani R."/>
            <person name="Kawakami T."/>
            <person name="Noguchi S."/>
            <person name="Itoh T."/>
            <person name="Shigeta K."/>
            <person name="Senba T."/>
            <person name="Matsumura K."/>
            <person name="Nakajima Y."/>
            <person name="Mizuno T."/>
            <person name="Morinaga M."/>
            <person name="Sasaki M."/>
            <person name="Togashi T."/>
            <person name="Oyama M."/>
            <person name="Hata H."/>
            <person name="Watanabe M."/>
            <person name="Komatsu T."/>
            <person name="Mizushima-Sugano J."/>
            <person name="Satoh T."/>
            <person name="Shirai Y."/>
            <person name="Takahashi Y."/>
            <person name="Nakagawa K."/>
            <person name="Okumura K."/>
            <person name="Nagase T."/>
            <person name="Nomura N."/>
            <person name="Kikuchi H."/>
            <person name="Masuho Y."/>
            <person name="Yamashita R."/>
            <person name="Nakai K."/>
            <person name="Yada T."/>
            <person name="Nakamura Y."/>
            <person name="Ohara O."/>
            <person name="Isogai T."/>
            <person name="Sugano S."/>
        </authorList>
    </citation>
    <scope>NUCLEOTIDE SEQUENCE [LARGE SCALE MRNA]</scope>
</reference>
<reference key="2">
    <citation type="journal article" date="2004" name="Nature">
        <title>The DNA sequence and comparative analysis of human chromosome 10.</title>
        <authorList>
            <person name="Deloukas P."/>
            <person name="Earthrowl M.E."/>
            <person name="Grafham D.V."/>
            <person name="Rubenfield M."/>
            <person name="French L."/>
            <person name="Steward C.A."/>
            <person name="Sims S.K."/>
            <person name="Jones M.C."/>
            <person name="Searle S."/>
            <person name="Scott C."/>
            <person name="Howe K."/>
            <person name="Hunt S.E."/>
            <person name="Andrews T.D."/>
            <person name="Gilbert J.G.R."/>
            <person name="Swarbreck D."/>
            <person name="Ashurst J.L."/>
            <person name="Taylor A."/>
            <person name="Battles J."/>
            <person name="Bird C.P."/>
            <person name="Ainscough R."/>
            <person name="Almeida J.P."/>
            <person name="Ashwell R.I.S."/>
            <person name="Ambrose K.D."/>
            <person name="Babbage A.K."/>
            <person name="Bagguley C.L."/>
            <person name="Bailey J."/>
            <person name="Banerjee R."/>
            <person name="Bates K."/>
            <person name="Beasley H."/>
            <person name="Bray-Allen S."/>
            <person name="Brown A.J."/>
            <person name="Brown J.Y."/>
            <person name="Burford D.C."/>
            <person name="Burrill W."/>
            <person name="Burton J."/>
            <person name="Cahill P."/>
            <person name="Camire D."/>
            <person name="Carter N.P."/>
            <person name="Chapman J.C."/>
            <person name="Clark S.Y."/>
            <person name="Clarke G."/>
            <person name="Clee C.M."/>
            <person name="Clegg S."/>
            <person name="Corby N."/>
            <person name="Coulson A."/>
            <person name="Dhami P."/>
            <person name="Dutta I."/>
            <person name="Dunn M."/>
            <person name="Faulkner L."/>
            <person name="Frankish A."/>
            <person name="Frankland J.A."/>
            <person name="Garner P."/>
            <person name="Garnett J."/>
            <person name="Gribble S."/>
            <person name="Griffiths C."/>
            <person name="Grocock R."/>
            <person name="Gustafson E."/>
            <person name="Hammond S."/>
            <person name="Harley J.L."/>
            <person name="Hart E."/>
            <person name="Heath P.D."/>
            <person name="Ho T.P."/>
            <person name="Hopkins B."/>
            <person name="Horne J."/>
            <person name="Howden P.J."/>
            <person name="Huckle E."/>
            <person name="Hynds C."/>
            <person name="Johnson C."/>
            <person name="Johnson D."/>
            <person name="Kana A."/>
            <person name="Kay M."/>
            <person name="Kimberley A.M."/>
            <person name="Kershaw J.K."/>
            <person name="Kokkinaki M."/>
            <person name="Laird G.K."/>
            <person name="Lawlor S."/>
            <person name="Lee H.M."/>
            <person name="Leongamornlert D.A."/>
            <person name="Laird G."/>
            <person name="Lloyd C."/>
            <person name="Lloyd D.M."/>
            <person name="Loveland J."/>
            <person name="Lovell J."/>
            <person name="McLaren S."/>
            <person name="McLay K.E."/>
            <person name="McMurray A."/>
            <person name="Mashreghi-Mohammadi M."/>
            <person name="Matthews L."/>
            <person name="Milne S."/>
            <person name="Nickerson T."/>
            <person name="Nguyen M."/>
            <person name="Overton-Larty E."/>
            <person name="Palmer S.A."/>
            <person name="Pearce A.V."/>
            <person name="Peck A.I."/>
            <person name="Pelan S."/>
            <person name="Phillimore B."/>
            <person name="Porter K."/>
            <person name="Rice C.M."/>
            <person name="Rogosin A."/>
            <person name="Ross M.T."/>
            <person name="Sarafidou T."/>
            <person name="Sehra H.K."/>
            <person name="Shownkeen R."/>
            <person name="Skuce C.D."/>
            <person name="Smith M."/>
            <person name="Standring L."/>
            <person name="Sycamore N."/>
            <person name="Tester J."/>
            <person name="Thorpe A."/>
            <person name="Torcasso W."/>
            <person name="Tracey A."/>
            <person name="Tromans A."/>
            <person name="Tsolas J."/>
            <person name="Wall M."/>
            <person name="Walsh J."/>
            <person name="Wang H."/>
            <person name="Weinstock K."/>
            <person name="West A.P."/>
            <person name="Willey D.L."/>
            <person name="Whitehead S.L."/>
            <person name="Wilming L."/>
            <person name="Wray P.W."/>
            <person name="Young L."/>
            <person name="Chen Y."/>
            <person name="Lovering R.C."/>
            <person name="Moschonas N.K."/>
            <person name="Siebert R."/>
            <person name="Fechtel K."/>
            <person name="Bentley D."/>
            <person name="Durbin R.M."/>
            <person name="Hubbard T."/>
            <person name="Doucette-Stamm L."/>
            <person name="Beck S."/>
            <person name="Smith D.R."/>
            <person name="Rogers J."/>
        </authorList>
    </citation>
    <scope>NUCLEOTIDE SEQUENCE [LARGE SCALE GENOMIC DNA]</scope>
</reference>
<reference key="3">
    <citation type="journal article" date="2004" name="Genome Res.">
        <title>The status, quality, and expansion of the NIH full-length cDNA project: the Mammalian Gene Collection (MGC).</title>
        <authorList>
            <consortium name="The MGC Project Team"/>
        </authorList>
    </citation>
    <scope>NUCLEOTIDE SEQUENCE [LARGE SCALE MRNA]</scope>
    <source>
        <tissue>Eye</tissue>
    </source>
</reference>
<reference key="4">
    <citation type="submission" date="2002-02" db="UniProtKB">
        <authorList>
            <person name="Rabilloud T."/>
        </authorList>
    </citation>
    <scope>SUBCELLULAR LOCATION</scope>
</reference>
<reference key="5">
    <citation type="journal article" date="2012" name="Proc. Natl. Acad. Sci. U.S.A.">
        <title>N-terminal acetylome analyses and functional insights of the N-terminal acetyltransferase NatB.</title>
        <authorList>
            <person name="Van Damme P."/>
            <person name="Lasa M."/>
            <person name="Polevoda B."/>
            <person name="Gazquez C."/>
            <person name="Elosegui-Artola A."/>
            <person name="Kim D.S."/>
            <person name="De Juan-Pardo E."/>
            <person name="Demeyer K."/>
            <person name="Hole K."/>
            <person name="Larrea E."/>
            <person name="Timmerman E."/>
            <person name="Prieto J."/>
            <person name="Arnesen T."/>
            <person name="Sherman F."/>
            <person name="Gevaert K."/>
            <person name="Aldabe R."/>
        </authorList>
    </citation>
    <scope>IDENTIFICATION BY MASS SPECTROMETRY [LARGE SCALE ANALYSIS]</scope>
</reference>
<reference key="6">
    <citation type="journal article" date="2015" name="Cell Rep.">
        <title>An organellar nalpha-acetyltransferase, naa60, acetylates cytosolic N termini of transmembrane proteins and maintains Golgi integrity.</title>
        <authorList>
            <person name="Aksnes H."/>
            <person name="Van Damme P."/>
            <person name="Goris M."/>
            <person name="Starheim K.K."/>
            <person name="Marie M."/>
            <person name="Stoeve S.I."/>
            <person name="Hoel C."/>
            <person name="Kalvik T.V."/>
            <person name="Hole K."/>
            <person name="Glomnes N."/>
            <person name="Furnes C."/>
            <person name="Ljostveit S."/>
            <person name="Ziegler M."/>
            <person name="Niere M."/>
            <person name="Gevaert K."/>
            <person name="Arnesen T."/>
        </authorList>
    </citation>
    <scope>ACETYLATION AT MET-1</scope>
</reference>
<reference key="7">
    <citation type="journal article" date="2015" name="Proteomics">
        <title>N-terminome analysis of the human mitochondrial proteome.</title>
        <authorList>
            <person name="Vaca Jacome A.S."/>
            <person name="Rabilloud T."/>
            <person name="Schaeffer-Reiss C."/>
            <person name="Rompais M."/>
            <person name="Ayoub D."/>
            <person name="Lane L."/>
            <person name="Bairoch A."/>
            <person name="Van Dorsselaer A."/>
            <person name="Carapito C."/>
        </authorList>
    </citation>
    <scope>IDENTIFICATION BY MASS SPECTROMETRY [LARGE SCALE ANALYSIS]</scope>
</reference>
<reference key="8">
    <citation type="journal article" date="2018" name="Science">
        <title>SFXN1 is a mitochondrial serine transporter required for one-carbon metabolism.</title>
        <authorList>
            <person name="Kory N."/>
            <person name="Wyant G.A."/>
            <person name="Prakash G."/>
            <person name="Uit de Bos J."/>
            <person name="Bottanelli F."/>
            <person name="Pacold M.E."/>
            <person name="Chan S.H."/>
            <person name="Lewis C.A."/>
            <person name="Wang T."/>
            <person name="Keys H.R."/>
            <person name="Guo Y.E."/>
            <person name="Sabatini D.M."/>
        </authorList>
    </citation>
    <scope>FUNCTION</scope>
    <scope>CATALYTIC ACTIVITY</scope>
    <scope>SUBCELLULAR LOCATION</scope>
</reference>
<gene>
    <name evidence="5 8" type="primary">SFXN3</name>
</gene>
<keyword id="KW-0007">Acetylation</keyword>
<keyword id="KW-0029">Amino-acid transport</keyword>
<keyword id="KW-0472">Membrane</keyword>
<keyword id="KW-0496">Mitochondrion</keyword>
<keyword id="KW-0554">One-carbon metabolism</keyword>
<keyword id="KW-1267">Proteomics identification</keyword>
<keyword id="KW-1185">Reference proteome</keyword>
<keyword id="KW-0812">Transmembrane</keyword>
<keyword id="KW-1133">Transmembrane helix</keyword>
<keyword id="KW-0813">Transport</keyword>
<sequence>MGELPLDINIQEPRWDQSTFLGRARHFFTVTDPRNLLLSGAQLEASRNIVQNYRAGVVTPGITEDQLWRAKYVYDSAFHPDTGEKVVLIGRMSAQVPMNMTITGCMLTFYRKTPTVVFWQWVNQSFNAIVNYSNRSGDTPITVRQLGTAYVSATTGAVATALGLKSLTKHLPPLVGRFVPFAAVAAANCINIPLMRQRELQVGIPVADEAGQRLGYSVTAAKQGIFQVVISRICMAIPAMAIPPLIMDTLEKKDFLKRRPWLGAPLQVGLVGFCLVFATPLCCALFPQKSSIHISNLEPELRAQIHEQNPSVEVVYYNKGL</sequence>
<accession>Q9BWM7</accession>
<accession>Q8NCJ0</accession>
<accession>Q9NTP4</accession>
<evidence type="ECO:0000255" key="1"/>
<evidence type="ECO:0000269" key="2">
    <source>
    </source>
</evidence>
<evidence type="ECO:0000269" key="3">
    <source>
    </source>
</evidence>
<evidence type="ECO:0000269" key="4">
    <source ref="4"/>
</evidence>
<evidence type="ECO:0000303" key="5">
    <source>
    </source>
</evidence>
<evidence type="ECO:0000305" key="6"/>
<evidence type="ECO:0000305" key="7">
    <source>
    </source>
</evidence>
<evidence type="ECO:0000312" key="8">
    <source>
        <dbReference type="HGNC" id="HGNC:16087"/>
    </source>
</evidence>
<comment type="function">
    <text evidence="3">Mitochondrial serine transporter that mediates transport of serine into mitochondria, an important step of the one-carbon metabolism pathway (PubMed:30442778). Mitochondrial serine is converted to glycine and formate, which then exits to the cytosol where it is used to generate the charged folates that serve as one-carbon donors (PubMed:30442778).</text>
</comment>
<comment type="catalytic activity">
    <reaction evidence="7">
        <text>L-serine(in) = L-serine(out)</text>
        <dbReference type="Rhea" id="RHEA:35031"/>
        <dbReference type="ChEBI" id="CHEBI:33384"/>
    </reaction>
</comment>
<comment type="interaction">
    <interactant intactId="EBI-1171999">
        <id>Q9BWM7</id>
    </interactant>
    <interactant intactId="EBI-13059134">
        <id>Q13520</id>
        <label>AQP6</label>
    </interactant>
    <organismsDiffer>false</organismsDiffer>
    <experiments>3</experiments>
</comment>
<comment type="interaction">
    <interactant intactId="EBI-1171999">
        <id>Q9BWM7</id>
    </interactant>
    <interactant intactId="EBI-3915253">
        <id>Q15125</id>
        <label>EBP</label>
    </interactant>
    <organismsDiffer>false</organismsDiffer>
    <experiments>3</experiments>
</comment>
<comment type="interaction">
    <interactant intactId="EBI-1171999">
        <id>Q9BWM7</id>
    </interactant>
    <interactant intactId="EBI-1052304">
        <id>Q8NBQ5</id>
        <label>HSD17B11</label>
    </interactant>
    <organismsDiffer>false</organismsDiffer>
    <experiments>3</experiments>
</comment>
<comment type="interaction">
    <interactant intactId="EBI-1171999">
        <id>Q9BWM7</id>
    </interactant>
    <interactant intactId="EBI-18053395">
        <id>Q7Z5P4</id>
        <label>HSD17B13</label>
    </interactant>
    <organismsDiffer>false</organismsDiffer>
    <experiments>3</experiments>
</comment>
<comment type="interaction">
    <interactant intactId="EBI-1171999">
        <id>Q9BWM7</id>
    </interactant>
    <interactant intactId="EBI-466029">
        <id>P42858</id>
        <label>HTT</label>
    </interactant>
    <organismsDiffer>false</organismsDiffer>
    <experiments>9</experiments>
</comment>
<comment type="interaction">
    <interactant intactId="EBI-1171999">
        <id>Q9BWM7</id>
    </interactant>
    <interactant intactId="EBI-21591415">
        <id>P13473-2</id>
        <label>LAMP2</label>
    </interactant>
    <organismsDiffer>false</organismsDiffer>
    <experiments>4</experiments>
</comment>
<comment type="interaction">
    <interactant intactId="EBI-1171999">
        <id>Q9BWM7</id>
    </interactant>
    <interactant intactId="EBI-750776">
        <id>O95214</id>
        <label>LEPROTL1</label>
    </interactant>
    <organismsDiffer>false</organismsDiffer>
    <experiments>3</experiments>
</comment>
<comment type="interaction">
    <interactant intactId="EBI-1171999">
        <id>Q9BWM7</id>
    </interactant>
    <interactant intactId="EBI-7545592">
        <id>Q9H6H4</id>
        <label>REEP4</label>
    </interactant>
    <organismsDiffer>false</organismsDiffer>
    <experiments>3</experiments>
</comment>
<comment type="interaction">
    <interactant intactId="EBI-1171999">
        <id>Q9BWM7</id>
    </interactant>
    <interactant intactId="EBI-10192441">
        <id>Q86VR2</id>
        <label>RETREG3</label>
    </interactant>
    <organismsDiffer>false</organismsDiffer>
    <experiments>5</experiments>
</comment>
<comment type="interaction">
    <interactant intactId="EBI-1171999">
        <id>Q9BWM7</id>
    </interactant>
    <interactant intactId="EBI-8636004">
        <id>Q96GQ5</id>
        <label>RUSF1</label>
    </interactant>
    <organismsDiffer>false</organismsDiffer>
    <experiments>3</experiments>
</comment>
<comment type="interaction">
    <interactant intactId="EBI-1171999">
        <id>Q9BWM7</id>
    </interactant>
    <interactant intactId="EBI-17247926">
        <id>Q9NY72</id>
        <label>SCN3B</label>
    </interactant>
    <organismsDiffer>false</organismsDiffer>
    <experiments>5</experiments>
</comment>
<comment type="interaction">
    <interactant intactId="EBI-1171999">
        <id>Q9BWM7</id>
    </interactant>
    <interactant intactId="EBI-2623095">
        <id>Q9Y371</id>
        <label>SH3GLB1</label>
    </interactant>
    <organismsDiffer>false</organismsDiffer>
    <experiments>3</experiments>
</comment>
<comment type="interaction">
    <interactant intactId="EBI-1171999">
        <id>Q9BWM7</id>
    </interactant>
    <interactant intactId="EBI-12947623">
        <id>Q96MV1</id>
        <label>TLCD4</label>
    </interactant>
    <organismsDiffer>false</organismsDiffer>
    <experiments>3</experiments>
</comment>
<comment type="interaction">
    <interactant intactId="EBI-1171999">
        <id>Q9BWM7</id>
    </interactant>
    <interactant intactId="EBI-8638294">
        <id>Q9NUH8</id>
        <label>TMEM14B</label>
    </interactant>
    <organismsDiffer>false</organismsDiffer>
    <experiments>3</experiments>
</comment>
<comment type="interaction">
    <interactant intactId="EBI-1171999">
        <id>Q9BWM7</id>
    </interactant>
    <interactant intactId="EBI-726044">
        <id>Q9NW97</id>
        <label>TMEM51</label>
    </interactant>
    <organismsDiffer>false</organismsDiffer>
    <experiments>3</experiments>
</comment>
<comment type="interaction">
    <interactant intactId="EBI-1171999">
        <id>Q9BWM7</id>
    </interactant>
    <interactant intactId="EBI-6447886">
        <id>Q9Y320</id>
        <label>TMX2</label>
    </interactant>
    <organismsDiffer>false</organismsDiffer>
    <experiments>3</experiments>
</comment>
<comment type="interaction">
    <interactant intactId="EBI-1171999">
        <id>Q9BWM7</id>
    </interactant>
    <interactant intactId="EBI-21372540">
        <id>Q309B1</id>
        <label>TRIM16L</label>
    </interactant>
    <organismsDiffer>false</organismsDiffer>
    <experiments>3</experiments>
</comment>
<comment type="interaction">
    <interactant intactId="EBI-1171999">
        <id>Q9BWM7</id>
    </interactant>
    <interactant intactId="EBI-12837904">
        <id>Q96MV8</id>
        <label>ZDHHC15</label>
    </interactant>
    <organismsDiffer>false</organismsDiffer>
    <experiments>3</experiments>
</comment>
<comment type="subcellular location">
    <subcellularLocation>
        <location evidence="3 4">Mitochondrion membrane</location>
        <topology evidence="1">Multi-pass membrane protein</topology>
    </subcellularLocation>
</comment>
<comment type="similarity">
    <text evidence="6">Belongs to the sideroflexin family.</text>
</comment>
<comment type="sequence caution" evidence="6">
    <conflict type="erroneous initiation">
        <sequence resource="EMBL-CDS" id="AAH00124"/>
    </conflict>
    <text>Extended N-terminus.</text>
</comment>
<comment type="sequence caution" evidence="6">
    <conflict type="erroneous initiation">
        <sequence resource="EMBL-CDS" id="BAC11151"/>
    </conflict>
    <text>Extended N-terminus.</text>
</comment>
<name>SFXN3_HUMAN</name>